<proteinExistence type="inferred from homology"/>
<feature type="chain" id="PRO_0000370912" description="ATP synthase subunit delta">
    <location>
        <begin position="1"/>
        <end position="186"/>
    </location>
</feature>
<name>ATPD_BRUO2</name>
<evidence type="ECO:0000255" key="1">
    <source>
        <dbReference type="HAMAP-Rule" id="MF_01416"/>
    </source>
</evidence>
<keyword id="KW-0066">ATP synthesis</keyword>
<keyword id="KW-0997">Cell inner membrane</keyword>
<keyword id="KW-1003">Cell membrane</keyword>
<keyword id="KW-0139">CF(1)</keyword>
<keyword id="KW-0375">Hydrogen ion transport</keyword>
<keyword id="KW-0406">Ion transport</keyword>
<keyword id="KW-0472">Membrane</keyword>
<keyword id="KW-0813">Transport</keyword>
<comment type="function">
    <text evidence="1">F(1)F(0) ATP synthase produces ATP from ADP in the presence of a proton or sodium gradient. F-type ATPases consist of two structural domains, F(1) containing the extramembraneous catalytic core and F(0) containing the membrane proton channel, linked together by a central stalk and a peripheral stalk. During catalysis, ATP synthesis in the catalytic domain of F(1) is coupled via a rotary mechanism of the central stalk subunits to proton translocation.</text>
</comment>
<comment type="function">
    <text evidence="1">This protein is part of the stalk that links CF(0) to CF(1). It either transmits conformational changes from CF(0) to CF(1) or is implicated in proton conduction.</text>
</comment>
<comment type="subunit">
    <text evidence="1">F-type ATPases have 2 components, F(1) - the catalytic core - and F(0) - the membrane proton channel. F(1) has five subunits: alpha(3), beta(3), gamma(1), delta(1), epsilon(1). F(0) has three main subunits: a(1), b(2) and c(10-14). The alpha and beta chains form an alternating ring which encloses part of the gamma chain. F(1) is attached to F(0) by a central stalk formed by the gamma and epsilon chains, while a peripheral stalk is formed by the delta and b chains.</text>
</comment>
<comment type="subcellular location">
    <subcellularLocation>
        <location evidence="1">Cell inner membrane</location>
        <topology evidence="1">Peripheral membrane protein</topology>
    </subcellularLocation>
</comment>
<comment type="similarity">
    <text evidence="1">Belongs to the ATPase delta chain family.</text>
</comment>
<reference key="1">
    <citation type="journal article" date="2009" name="PLoS ONE">
        <title>Genome degradation in Brucella ovis corresponds with narrowing of its host range and tissue tropism.</title>
        <authorList>
            <person name="Tsolis R.M."/>
            <person name="Seshadri R."/>
            <person name="Santos R.L."/>
            <person name="Sangari F.J."/>
            <person name="Lobo J.M."/>
            <person name="de Jong M.F."/>
            <person name="Ren Q."/>
            <person name="Myers G."/>
            <person name="Brinkac L.M."/>
            <person name="Nelson W.C."/>
            <person name="Deboy R.T."/>
            <person name="Angiuoli S."/>
            <person name="Khouri H."/>
            <person name="Dimitrov G."/>
            <person name="Robinson J.R."/>
            <person name="Mulligan S."/>
            <person name="Walker R.L."/>
            <person name="Elzer P.E."/>
            <person name="Hassan K.A."/>
            <person name="Paulsen I.T."/>
        </authorList>
    </citation>
    <scope>NUCLEOTIDE SEQUENCE [LARGE SCALE GENOMIC DNA]</scope>
    <source>
        <strain>ATCC 25840 / 63/290 / NCTC 10512</strain>
    </source>
</reference>
<organism>
    <name type="scientific">Brucella ovis (strain ATCC 25840 / 63/290 / NCTC 10512)</name>
    <dbReference type="NCBI Taxonomy" id="444178"/>
    <lineage>
        <taxon>Bacteria</taxon>
        <taxon>Pseudomonadati</taxon>
        <taxon>Pseudomonadota</taxon>
        <taxon>Alphaproteobacteria</taxon>
        <taxon>Hyphomicrobiales</taxon>
        <taxon>Brucellaceae</taxon>
        <taxon>Brucella/Ochrobactrum group</taxon>
        <taxon>Brucella</taxon>
    </lineage>
</organism>
<protein>
    <recommendedName>
        <fullName evidence="1">ATP synthase subunit delta</fullName>
    </recommendedName>
    <alternativeName>
        <fullName evidence="1">ATP synthase F(1) sector subunit delta</fullName>
    </alternativeName>
    <alternativeName>
        <fullName evidence="1">F-type ATPase subunit delta</fullName>
        <shortName evidence="1">F-ATPase subunit delta</shortName>
    </alternativeName>
</protein>
<sequence length="186" mass="19624">MAETSSLISGVAQRYAGSLFELALDANSVASVEKDLGRFEALLSGSEDLRRLISSPVFSSEDQLHAIGAIADKAGIKGLVGNFLRVVAQNRRLFALPGIIAAFRQIAAEHRGEISADVVSAHELTSAQQNELKATLKGVAGKDVTINVTVDPSILGGLIVKMGSRQIDTSLRTKLSSLKLALKEVG</sequence>
<gene>
    <name evidence="1" type="primary">atpH</name>
    <name type="ordered locus">BOV_1735</name>
</gene>
<dbReference type="EMBL" id="CP000708">
    <property type="protein sequence ID" value="ABQ61836.1"/>
    <property type="molecule type" value="Genomic_DNA"/>
</dbReference>
<dbReference type="RefSeq" id="WP_004688721.1">
    <property type="nucleotide sequence ID" value="NC_009505.1"/>
</dbReference>
<dbReference type="SMR" id="A5VSE4"/>
<dbReference type="KEGG" id="bov:BOV_1735"/>
<dbReference type="HOGENOM" id="CLU_085114_0_1_5"/>
<dbReference type="PhylomeDB" id="A5VSE4"/>
<dbReference type="Proteomes" id="UP000006383">
    <property type="component" value="Chromosome I"/>
</dbReference>
<dbReference type="GO" id="GO:0005886">
    <property type="term" value="C:plasma membrane"/>
    <property type="evidence" value="ECO:0007669"/>
    <property type="project" value="UniProtKB-SubCell"/>
</dbReference>
<dbReference type="GO" id="GO:0045259">
    <property type="term" value="C:proton-transporting ATP synthase complex"/>
    <property type="evidence" value="ECO:0007669"/>
    <property type="project" value="UniProtKB-KW"/>
</dbReference>
<dbReference type="GO" id="GO:0046933">
    <property type="term" value="F:proton-transporting ATP synthase activity, rotational mechanism"/>
    <property type="evidence" value="ECO:0007669"/>
    <property type="project" value="UniProtKB-UniRule"/>
</dbReference>
<dbReference type="Gene3D" id="1.10.520.20">
    <property type="entry name" value="N-terminal domain of the delta subunit of the F1F0-ATP synthase"/>
    <property type="match status" value="1"/>
</dbReference>
<dbReference type="HAMAP" id="MF_01416">
    <property type="entry name" value="ATP_synth_delta_bact"/>
    <property type="match status" value="1"/>
</dbReference>
<dbReference type="InterPro" id="IPR026015">
    <property type="entry name" value="ATP_synth_OSCP/delta_N_sf"/>
</dbReference>
<dbReference type="InterPro" id="IPR020781">
    <property type="entry name" value="ATPase_OSCP/d_CS"/>
</dbReference>
<dbReference type="InterPro" id="IPR000711">
    <property type="entry name" value="ATPase_OSCP/dsu"/>
</dbReference>
<dbReference type="NCBIfam" id="TIGR01145">
    <property type="entry name" value="ATP_synt_delta"/>
    <property type="match status" value="1"/>
</dbReference>
<dbReference type="NCBIfam" id="NF004402">
    <property type="entry name" value="PRK05758.2-2"/>
    <property type="match status" value="1"/>
</dbReference>
<dbReference type="NCBIfam" id="NF004406">
    <property type="entry name" value="PRK05758.3-2"/>
    <property type="match status" value="1"/>
</dbReference>
<dbReference type="PANTHER" id="PTHR11910">
    <property type="entry name" value="ATP SYNTHASE DELTA CHAIN"/>
    <property type="match status" value="1"/>
</dbReference>
<dbReference type="Pfam" id="PF00213">
    <property type="entry name" value="OSCP"/>
    <property type="match status" value="1"/>
</dbReference>
<dbReference type="PRINTS" id="PR00125">
    <property type="entry name" value="ATPASEDELTA"/>
</dbReference>
<dbReference type="SUPFAM" id="SSF47928">
    <property type="entry name" value="N-terminal domain of the delta subunit of the F1F0-ATP synthase"/>
    <property type="match status" value="1"/>
</dbReference>
<dbReference type="PROSITE" id="PS00389">
    <property type="entry name" value="ATPASE_DELTA"/>
    <property type="match status" value="1"/>
</dbReference>
<accession>A5VSE4</accession>